<dbReference type="EC" id="2.1.1.-"/>
<dbReference type="EMBL" id="U77466">
    <property type="protein sequence ID" value="AAC44875.1"/>
    <property type="molecule type" value="Genomic_DNA"/>
</dbReference>
<dbReference type="EMBL" id="LT708304">
    <property type="protein sequence ID" value="SIT99260.1"/>
    <property type="molecule type" value="Genomic_DNA"/>
</dbReference>
<dbReference type="RefSeq" id="NP_854320.1">
    <property type="nucleotide sequence ID" value="NC_002945.3"/>
</dbReference>
<dbReference type="RefSeq" id="WP_003403302.1">
    <property type="nucleotide sequence ID" value="NC_002945.4"/>
</dbReference>
<dbReference type="SMR" id="Q7U1K0"/>
<dbReference type="GeneID" id="45424603"/>
<dbReference type="KEGG" id="mbo:BQ2027_MB0662C"/>
<dbReference type="PATRIC" id="fig|233413.5.peg.722"/>
<dbReference type="UniPathway" id="UPA00915"/>
<dbReference type="Proteomes" id="UP000001419">
    <property type="component" value="Chromosome"/>
</dbReference>
<dbReference type="GO" id="GO:0008168">
    <property type="term" value="F:methyltransferase activity"/>
    <property type="evidence" value="ECO:0007669"/>
    <property type="project" value="UniProtKB-KW"/>
</dbReference>
<dbReference type="GO" id="GO:0008610">
    <property type="term" value="P:lipid biosynthetic process"/>
    <property type="evidence" value="ECO:0000315"/>
    <property type="project" value="UniProtKB"/>
</dbReference>
<dbReference type="GO" id="GO:0032259">
    <property type="term" value="P:methylation"/>
    <property type="evidence" value="ECO:0007669"/>
    <property type="project" value="UniProtKB-KW"/>
</dbReference>
<dbReference type="CDD" id="cd02440">
    <property type="entry name" value="AdoMet_MTases"/>
    <property type="match status" value="1"/>
</dbReference>
<dbReference type="FunFam" id="3.40.50.150:FF:000115">
    <property type="entry name" value="Cyclopropane mycolic acid synthase 1"/>
    <property type="match status" value="1"/>
</dbReference>
<dbReference type="Gene3D" id="3.40.50.150">
    <property type="entry name" value="Vaccinia Virus protein VP39"/>
    <property type="match status" value="1"/>
</dbReference>
<dbReference type="InterPro" id="IPR050723">
    <property type="entry name" value="CFA/CMAS"/>
</dbReference>
<dbReference type="InterPro" id="IPR003333">
    <property type="entry name" value="CMAS"/>
</dbReference>
<dbReference type="InterPro" id="IPR047672">
    <property type="entry name" value="CMAS_actinobact"/>
</dbReference>
<dbReference type="InterPro" id="IPR029063">
    <property type="entry name" value="SAM-dependent_MTases_sf"/>
</dbReference>
<dbReference type="NCBIfam" id="NF040660">
    <property type="entry name" value="mycolic_MTase"/>
    <property type="match status" value="1"/>
</dbReference>
<dbReference type="PANTHER" id="PTHR43667">
    <property type="entry name" value="CYCLOPROPANE-FATTY-ACYL-PHOSPHOLIPID SYNTHASE"/>
    <property type="match status" value="1"/>
</dbReference>
<dbReference type="PANTHER" id="PTHR43667:SF1">
    <property type="entry name" value="CYCLOPROPANE-FATTY-ACYL-PHOSPHOLIPID SYNTHASE"/>
    <property type="match status" value="1"/>
</dbReference>
<dbReference type="Pfam" id="PF02353">
    <property type="entry name" value="CMAS"/>
    <property type="match status" value="1"/>
</dbReference>
<dbReference type="PIRSF" id="PIRSF003085">
    <property type="entry name" value="CMAS"/>
    <property type="match status" value="1"/>
</dbReference>
<dbReference type="SUPFAM" id="SSF53335">
    <property type="entry name" value="S-adenosyl-L-methionine-dependent methyltransferases"/>
    <property type="match status" value="1"/>
</dbReference>
<reference key="1">
    <citation type="journal article" date="1997" name="Mol. Microbiol.">
        <title>Mycobacterium bovis BCG genes involved in the biosynthesis of cyclopropyl keto- and hydroxy-mycolic acids.</title>
        <authorList>
            <person name="Dubnau E."/>
            <person name="Laneelle M.-A."/>
            <person name="Soares S."/>
            <person name="Benichou A."/>
            <person name="Vaz T."/>
            <person name="Prome D."/>
            <person name="Prome J.-C."/>
            <person name="Daffe M."/>
            <person name="Quemard A."/>
        </authorList>
    </citation>
    <scope>NUCLEOTIDE SEQUENCE [GENOMIC DNA]</scope>
    <scope>NOMENCLATURE</scope>
    <source>
        <strain>BCG / Pasteur</strain>
    </source>
</reference>
<reference key="2">
    <citation type="journal article" date="2003" name="Proc. Natl. Acad. Sci. U.S.A.">
        <title>The complete genome sequence of Mycobacterium bovis.</title>
        <authorList>
            <person name="Garnier T."/>
            <person name="Eiglmeier K."/>
            <person name="Camus J.-C."/>
            <person name="Medina N."/>
            <person name="Mansoor H."/>
            <person name="Pryor M."/>
            <person name="Duthoy S."/>
            <person name="Grondin S."/>
            <person name="Lacroix C."/>
            <person name="Monsempe C."/>
            <person name="Simon S."/>
            <person name="Harris B."/>
            <person name="Atkin R."/>
            <person name="Doggett J."/>
            <person name="Mayes R."/>
            <person name="Keating L."/>
            <person name="Wheeler P.R."/>
            <person name="Parkhill J."/>
            <person name="Barrell B.G."/>
            <person name="Cole S.T."/>
            <person name="Gordon S.V."/>
            <person name="Hewinson R.G."/>
        </authorList>
    </citation>
    <scope>NUCLEOTIDE SEQUENCE [LARGE SCALE GENOMIC DNA]</scope>
    <source>
        <strain>ATCC BAA-935 / AF2122/97</strain>
    </source>
</reference>
<reference key="3">
    <citation type="journal article" date="2017" name="Genome Announc.">
        <title>Updated reference genome sequence and annotation of Mycobacterium bovis AF2122/97.</title>
        <authorList>
            <person name="Malone K.M."/>
            <person name="Farrell D."/>
            <person name="Stuber T.P."/>
            <person name="Schubert O.T."/>
            <person name="Aebersold R."/>
            <person name="Robbe-Austerman S."/>
            <person name="Gordon S.V."/>
        </authorList>
    </citation>
    <scope>NUCLEOTIDE SEQUENCE [LARGE SCALE GENOMIC DNA]</scope>
    <scope>GENOME REANNOTATION</scope>
    <source>
        <strain>ATCC BAA-935 / AF2122/97</strain>
    </source>
</reference>
<reference key="4">
    <citation type="journal article" date="1998" name="Mol. Microbiol.">
        <title>The effect of oxygenated mycolic acid composition on cell wall function and macrophage growth in Mycobacterium tuberculosis.</title>
        <authorList>
            <person name="Yuan Y."/>
            <person name="Zhu Y."/>
            <person name="Crane D.D."/>
            <person name="Barry C.E. III"/>
        </authorList>
    </citation>
    <scope>FUNCTION IN OXYGEN-CONTAINING MYCOLATES BIOSYNTHESIS</scope>
</reference>
<reference key="5">
    <citation type="journal article" date="2000" name="J. Bacteriol.">
        <title>A point mutation in the mma3 gene is responsible for impaired methoxymycolic acid production in Mycobacterium bovis BCG strains obtained after 1927.</title>
        <authorList>
            <person name="Behr M.A."/>
            <person name="Schroeder B.G."/>
            <person name="Brinkman J.N."/>
            <person name="Slayden R.A."/>
            <person name="Barry C.E. III"/>
        </authorList>
    </citation>
    <scope>FUNCTION IN O-METHYLATED MYCOLIC ACID BIOSYNTHESIS</scope>
</reference>
<organism>
    <name type="scientific">Mycobacterium bovis (strain ATCC BAA-935 / AF2122/97)</name>
    <dbReference type="NCBI Taxonomy" id="233413"/>
    <lineage>
        <taxon>Bacteria</taxon>
        <taxon>Bacillati</taxon>
        <taxon>Actinomycetota</taxon>
        <taxon>Actinomycetes</taxon>
        <taxon>Mycobacteriales</taxon>
        <taxon>Mycobacteriaceae</taxon>
        <taxon>Mycobacterium</taxon>
        <taxon>Mycobacterium tuberculosis complex</taxon>
    </lineage>
</organism>
<evidence type="ECO:0000250" key="1"/>
<evidence type="ECO:0000269" key="2">
    <source>
    </source>
</evidence>
<evidence type="ECO:0000269" key="3">
    <source>
    </source>
</evidence>
<evidence type="ECO:0000305" key="4"/>
<accession>Q7U1K0</accession>
<accession>A0A1R3XVY7</accession>
<accession>P94924</accession>
<accession>Q9ZH74</accession>
<accession>X2BFP0</accession>
<sequence length="293" mass="33263">MSDNSTGTTKSRSNVDDVQAHYDLSDAFFALFQDPTRTYSCAYFERDDMTLHEAQVAKLDLTLGKLGLEPGMTLLDVGCGWGSVMKRAVERYDVNVVGLTLSKNQHAYCQQVLDKVDTNRSHRVLLSDWANFSEPVDRIVTIEAIEHFGFERYDDFFKFAYNAMPADGVMLLHSITGLHVKQVIERGIPLTMEMAKFIRFIVTDIFPGGRLPTIETIEEHVTKAGFTITDIQSLQPHFARTLDLWAEALQAHKDEAIEIQSAEVYERYMKYLTGCAKAFRMGYIDCNQFTLAK</sequence>
<feature type="chain" id="PRO_0000398363" description="Methoxy mycolic acid synthase MmaA3">
    <location>
        <begin position="1"/>
        <end position="293"/>
    </location>
</feature>
<feature type="active site" evidence="1">
    <location>
        <position position="275"/>
    </location>
</feature>
<feature type="binding site" evidence="1">
    <location>
        <begin position="39"/>
        <end position="40"/>
    </location>
    <ligand>
        <name>S-adenosyl-L-methionine</name>
        <dbReference type="ChEBI" id="CHEBI:59789"/>
    </ligand>
</feature>
<feature type="binding site" evidence="1">
    <location>
        <begin position="78"/>
        <end position="80"/>
    </location>
    <ligand>
        <name>S-adenosyl-L-methionine</name>
        <dbReference type="ChEBI" id="CHEBI:59789"/>
    </ligand>
</feature>
<feature type="binding site" evidence="1">
    <location>
        <begin position="100"/>
        <end position="105"/>
    </location>
    <ligand>
        <name>S-adenosyl-L-methionine</name>
        <dbReference type="ChEBI" id="CHEBI:59789"/>
    </ligand>
</feature>
<feature type="binding site" evidence="1">
    <location>
        <begin position="129"/>
        <end position="130"/>
    </location>
    <ligand>
        <name>S-adenosyl-L-methionine</name>
        <dbReference type="ChEBI" id="CHEBI:59789"/>
    </ligand>
</feature>
<feature type="binding site" evidence="1">
    <location>
        <position position="142"/>
    </location>
    <ligand>
        <name>S-adenosyl-L-methionine</name>
        <dbReference type="ChEBI" id="CHEBI:59789"/>
    </ligand>
</feature>
<feature type="sequence conflict" description="In Ref. 1; AAC44875." evidence="4" ref="1">
    <original>S</original>
    <variation>F</variation>
    <location>
        <position position="11"/>
    </location>
</feature>
<feature type="sequence conflict" description="In Ref. 1; AAC44875." evidence="4" ref="1">
    <original>G</original>
    <variation>D</variation>
    <location>
        <position position="98"/>
    </location>
</feature>
<feature type="sequence conflict" description="In Ref. 1; AAC44875." evidence="4" ref="1">
    <original>MLLHSITGLH</original>
    <variation>DAAALDHRLAR</variation>
    <location>
        <begin position="170"/>
        <end position="179"/>
    </location>
</feature>
<feature type="sequence conflict" description="In Ref. 1; AAC44875." evidence="4" ref="1">
    <original>A</original>
    <variation>G</variation>
    <location>
        <position position="195"/>
    </location>
</feature>
<feature type="sequence conflict" description="In Ref. 1; AAC44875." evidence="4" ref="1">
    <original>I</original>
    <variation>V</variation>
    <location>
        <position position="228"/>
    </location>
</feature>
<feature type="sequence conflict" description="In Ref. 1; AAC44875." evidence="4" ref="1">
    <original>E</original>
    <variation>Q</variation>
    <location>
        <position position="263"/>
    </location>
</feature>
<feature type="sequence conflict" description="In Ref. 1; AAC44875." evidence="4" ref="1">
    <original>K</original>
    <variation>E</variation>
    <location>
        <position position="277"/>
    </location>
</feature>
<keyword id="KW-0444">Lipid biosynthesis</keyword>
<keyword id="KW-0443">Lipid metabolism</keyword>
<keyword id="KW-0489">Methyltransferase</keyword>
<keyword id="KW-1185">Reference proteome</keyword>
<keyword id="KW-0949">S-adenosyl-L-methionine</keyword>
<keyword id="KW-0808">Transferase</keyword>
<name>MMAA3_MYCBO</name>
<protein>
    <recommendedName>
        <fullName>Methoxy mycolic acid synthase MmaA3</fullName>
        <ecNumber>2.1.1.-</ecNumber>
    </recommendedName>
    <alternativeName>
        <fullName>Mycolic acid methyltransferase</fullName>
        <shortName>MA-MT</shortName>
    </alternativeName>
    <alternativeName>
        <fullName>S-adenosylmethionine-dependent methyltransferase</fullName>
        <shortName>AdoMet-MT</shortName>
        <shortName>SAM-MT</shortName>
    </alternativeName>
</protein>
<proteinExistence type="evidence at protein level"/>
<comment type="function">
    <text evidence="2 3">Involved in the biosynthesis of methoxymycolic acid. It catalyzes the O-methylation of the hydroxy group of the hydroxymycolate to form a methyl ether.</text>
</comment>
<comment type="pathway">
    <text>Lipid metabolism; mycolic acid biosynthesis.</text>
</comment>
<comment type="miscellaneous">
    <text>Strain BCG / Pasteur fails to produce methoxymycolic acid due to amino acid alterations in the coding sequence of the mmaA3 gene, but is able to produce ketomycolic acid.</text>
</comment>
<comment type="similarity">
    <text evidence="4">Belongs to the CFA/CMAS family.</text>
</comment>
<gene>
    <name type="primary">cmaB</name>
    <name type="synonym">mmaA3</name>
    <name type="synonym">mmas-3</name>
    <name type="ordered locus">BQ2027_MB0662C</name>
</gene>